<feature type="chain" id="PRO_0000242260" description="Phosphomethylpyrimidine synthase">
    <location>
        <begin position="1"/>
        <end position="555"/>
    </location>
</feature>
<feature type="binding site" evidence="1">
    <location>
        <position position="191"/>
    </location>
    <ligand>
        <name>substrate</name>
    </ligand>
</feature>
<feature type="binding site" evidence="1">
    <location>
        <position position="220"/>
    </location>
    <ligand>
        <name>substrate</name>
    </ligand>
</feature>
<feature type="binding site" evidence="1">
    <location>
        <position position="249"/>
    </location>
    <ligand>
        <name>substrate</name>
    </ligand>
</feature>
<feature type="binding site" evidence="1">
    <location>
        <position position="285"/>
    </location>
    <ligand>
        <name>substrate</name>
    </ligand>
</feature>
<feature type="binding site" evidence="1">
    <location>
        <begin position="305"/>
        <end position="307"/>
    </location>
    <ligand>
        <name>substrate</name>
    </ligand>
</feature>
<feature type="binding site" evidence="1">
    <location>
        <begin position="346"/>
        <end position="349"/>
    </location>
    <ligand>
        <name>substrate</name>
    </ligand>
</feature>
<feature type="binding site" evidence="1">
    <location>
        <position position="385"/>
    </location>
    <ligand>
        <name>substrate</name>
    </ligand>
</feature>
<feature type="binding site" evidence="1">
    <location>
        <position position="389"/>
    </location>
    <ligand>
        <name>Zn(2+)</name>
        <dbReference type="ChEBI" id="CHEBI:29105"/>
    </ligand>
</feature>
<feature type="binding site" evidence="1">
    <location>
        <position position="412"/>
    </location>
    <ligand>
        <name>substrate</name>
    </ligand>
</feature>
<feature type="binding site" evidence="1">
    <location>
        <position position="453"/>
    </location>
    <ligand>
        <name>Zn(2+)</name>
        <dbReference type="ChEBI" id="CHEBI:29105"/>
    </ligand>
</feature>
<feature type="binding site" evidence="1">
    <location>
        <position position="533"/>
    </location>
    <ligand>
        <name>[4Fe-4S] cluster</name>
        <dbReference type="ChEBI" id="CHEBI:49883"/>
        <note>4Fe-4S-S-AdoMet</note>
    </ligand>
</feature>
<feature type="binding site" evidence="1">
    <location>
        <position position="536"/>
    </location>
    <ligand>
        <name>[4Fe-4S] cluster</name>
        <dbReference type="ChEBI" id="CHEBI:49883"/>
        <note>4Fe-4S-S-AdoMet</note>
    </ligand>
</feature>
<feature type="binding site" evidence="1">
    <location>
        <position position="541"/>
    </location>
    <ligand>
        <name>[4Fe-4S] cluster</name>
        <dbReference type="ChEBI" id="CHEBI:49883"/>
        <note>4Fe-4S-S-AdoMet</note>
    </ligand>
</feature>
<comment type="function">
    <text evidence="1">Catalyzes the synthesis of the hydroxymethylpyrimidine phosphate (HMP-P) moiety of thiamine from aminoimidazole ribotide (AIR) in a radical S-adenosyl-L-methionine (SAM)-dependent reaction.</text>
</comment>
<comment type="catalytic activity">
    <reaction evidence="1">
        <text>5-amino-1-(5-phospho-beta-D-ribosyl)imidazole + S-adenosyl-L-methionine = 4-amino-2-methyl-5-(phosphooxymethyl)pyrimidine + CO + 5'-deoxyadenosine + formate + L-methionine + 3 H(+)</text>
        <dbReference type="Rhea" id="RHEA:24840"/>
        <dbReference type="ChEBI" id="CHEBI:15378"/>
        <dbReference type="ChEBI" id="CHEBI:15740"/>
        <dbReference type="ChEBI" id="CHEBI:17245"/>
        <dbReference type="ChEBI" id="CHEBI:17319"/>
        <dbReference type="ChEBI" id="CHEBI:57844"/>
        <dbReference type="ChEBI" id="CHEBI:58354"/>
        <dbReference type="ChEBI" id="CHEBI:59789"/>
        <dbReference type="ChEBI" id="CHEBI:137981"/>
        <dbReference type="EC" id="4.1.99.17"/>
    </reaction>
</comment>
<comment type="cofactor">
    <cofactor evidence="1">
        <name>[4Fe-4S] cluster</name>
        <dbReference type="ChEBI" id="CHEBI:49883"/>
    </cofactor>
    <text evidence="1">Binds 1 [4Fe-4S] cluster per subunit. The cluster is coordinated with 3 cysteines and an exchangeable S-adenosyl-L-methionine.</text>
</comment>
<comment type="pathway">
    <text evidence="1">Cofactor biosynthesis; thiamine diphosphate biosynthesis.</text>
</comment>
<comment type="subunit">
    <text evidence="1">Homodimer.</text>
</comment>
<comment type="similarity">
    <text evidence="1">Belongs to the ThiC family.</text>
</comment>
<name>THIC_EHRRG</name>
<gene>
    <name evidence="1" type="primary">thiC</name>
    <name type="ordered locus">ERGA_CDS_02970</name>
</gene>
<sequence>MKIDLNTIFPSSCKEYIPGKIYKNIKIGMRKVSFNNDTESILIYDTGGPHSDQDIQTNINNGIKKLRVNWITDRQDVEYYDRHTINTNSSTAFPLQNNKALKSKNDKPVTQMFYAKNNIITPEMEYVAIRENSLIQKLLSHTPNTIIPEITPELVRQEVAAGRAIIPANINHPESEPMIIGKNFLVKINANIGNSAVSSDINNEVYKMIYAIIYGADTVMDLSTGSHIHNTREWIIRNSPVPIGTVPIYQALNKVNGIVGELNFNIFKETLIEQAEQGVDYFTIHAGVLKKYIQYTTNRLTGIVSRGGAIIAQWCSIHNKENFLYTNFEEICDIMKSYDIAFSLGDGLRPGSIADANDKAQFLELKTLGELTDIAWKHDCQVMIEGPGHVPMHLIKENVEKQMYFCKEAPFYTLGPLTTDIAPGYDHITSAIGAAMIGWYGTSMLCYVTPKEHLGLPNLNDVKNGVITYKIAAHAADLAKGNPSAYIRDYALSYARFNFRWYDQFNLSLDPETAKSFHDESLPSEHAKSAHFCSMCGPKFCSMKLTHQLQLNSTE</sequence>
<dbReference type="EC" id="4.1.99.17" evidence="1"/>
<dbReference type="EMBL" id="CR925677">
    <property type="protein sequence ID" value="CAI27749.1"/>
    <property type="molecule type" value="Genomic_DNA"/>
</dbReference>
<dbReference type="RefSeq" id="WP_011255454.1">
    <property type="nucleotide sequence ID" value="NC_006831.1"/>
</dbReference>
<dbReference type="SMR" id="Q5FHG9"/>
<dbReference type="KEGG" id="erg:ERGA_CDS_02970"/>
<dbReference type="HOGENOM" id="CLU_013181_2_1_5"/>
<dbReference type="OrthoDB" id="9805897at2"/>
<dbReference type="UniPathway" id="UPA00060"/>
<dbReference type="Proteomes" id="UP000000533">
    <property type="component" value="Chromosome"/>
</dbReference>
<dbReference type="GO" id="GO:0005829">
    <property type="term" value="C:cytosol"/>
    <property type="evidence" value="ECO:0007669"/>
    <property type="project" value="TreeGrafter"/>
</dbReference>
<dbReference type="GO" id="GO:0051539">
    <property type="term" value="F:4 iron, 4 sulfur cluster binding"/>
    <property type="evidence" value="ECO:0007669"/>
    <property type="project" value="UniProtKB-KW"/>
</dbReference>
<dbReference type="GO" id="GO:0016830">
    <property type="term" value="F:carbon-carbon lyase activity"/>
    <property type="evidence" value="ECO:0007669"/>
    <property type="project" value="InterPro"/>
</dbReference>
<dbReference type="GO" id="GO:0008270">
    <property type="term" value="F:zinc ion binding"/>
    <property type="evidence" value="ECO:0007669"/>
    <property type="project" value="UniProtKB-UniRule"/>
</dbReference>
<dbReference type="GO" id="GO:0009228">
    <property type="term" value="P:thiamine biosynthetic process"/>
    <property type="evidence" value="ECO:0007669"/>
    <property type="project" value="UniProtKB-KW"/>
</dbReference>
<dbReference type="GO" id="GO:0009229">
    <property type="term" value="P:thiamine diphosphate biosynthetic process"/>
    <property type="evidence" value="ECO:0007669"/>
    <property type="project" value="UniProtKB-UniRule"/>
</dbReference>
<dbReference type="FunFam" id="3.20.20.540:FF:000001">
    <property type="entry name" value="Phosphomethylpyrimidine synthase"/>
    <property type="match status" value="1"/>
</dbReference>
<dbReference type="Gene3D" id="6.10.250.620">
    <property type="match status" value="1"/>
</dbReference>
<dbReference type="Gene3D" id="3.20.20.540">
    <property type="entry name" value="Radical SAM ThiC family, central domain"/>
    <property type="match status" value="1"/>
</dbReference>
<dbReference type="HAMAP" id="MF_00089">
    <property type="entry name" value="ThiC"/>
    <property type="match status" value="1"/>
</dbReference>
<dbReference type="InterPro" id="IPR037509">
    <property type="entry name" value="ThiC"/>
</dbReference>
<dbReference type="InterPro" id="IPR025747">
    <property type="entry name" value="ThiC-associated_dom"/>
</dbReference>
<dbReference type="InterPro" id="IPR038521">
    <property type="entry name" value="ThiC/Bza_core_dom"/>
</dbReference>
<dbReference type="InterPro" id="IPR002817">
    <property type="entry name" value="ThiC/BzaA/B"/>
</dbReference>
<dbReference type="NCBIfam" id="NF006763">
    <property type="entry name" value="PRK09284.1"/>
    <property type="match status" value="1"/>
</dbReference>
<dbReference type="NCBIfam" id="NF009895">
    <property type="entry name" value="PRK13352.1"/>
    <property type="match status" value="1"/>
</dbReference>
<dbReference type="NCBIfam" id="TIGR00190">
    <property type="entry name" value="thiC"/>
    <property type="match status" value="1"/>
</dbReference>
<dbReference type="PANTHER" id="PTHR30557:SF1">
    <property type="entry name" value="PHOSPHOMETHYLPYRIMIDINE SYNTHASE, CHLOROPLASTIC"/>
    <property type="match status" value="1"/>
</dbReference>
<dbReference type="PANTHER" id="PTHR30557">
    <property type="entry name" value="THIAMINE BIOSYNTHESIS PROTEIN THIC"/>
    <property type="match status" value="1"/>
</dbReference>
<dbReference type="Pfam" id="PF13667">
    <property type="entry name" value="ThiC-associated"/>
    <property type="match status" value="1"/>
</dbReference>
<dbReference type="Pfam" id="PF01964">
    <property type="entry name" value="ThiC_Rad_SAM"/>
    <property type="match status" value="1"/>
</dbReference>
<dbReference type="SFLD" id="SFLDF00407">
    <property type="entry name" value="phosphomethylpyrimidine_syntha"/>
    <property type="match status" value="1"/>
</dbReference>
<dbReference type="SFLD" id="SFLDG01114">
    <property type="entry name" value="phosphomethylpyrimidine_syntha"/>
    <property type="match status" value="1"/>
</dbReference>
<dbReference type="SFLD" id="SFLDS00113">
    <property type="entry name" value="Radical_SAM_Phosphomethylpyrim"/>
    <property type="match status" value="1"/>
</dbReference>
<protein>
    <recommendedName>
        <fullName evidence="1">Phosphomethylpyrimidine synthase</fullName>
        <ecNumber evidence="1">4.1.99.17</ecNumber>
    </recommendedName>
    <alternativeName>
        <fullName evidence="1">Hydroxymethylpyrimidine phosphate synthase</fullName>
        <shortName evidence="1">HMP-P synthase</shortName>
        <shortName evidence="1">HMP-phosphate synthase</shortName>
        <shortName evidence="1">HMPP synthase</shortName>
    </alternativeName>
    <alternativeName>
        <fullName evidence="1">Thiamine biosynthesis protein ThiC</fullName>
    </alternativeName>
</protein>
<proteinExistence type="inferred from homology"/>
<organism>
    <name type="scientific">Ehrlichia ruminantium (strain Gardel)</name>
    <dbReference type="NCBI Taxonomy" id="302409"/>
    <lineage>
        <taxon>Bacteria</taxon>
        <taxon>Pseudomonadati</taxon>
        <taxon>Pseudomonadota</taxon>
        <taxon>Alphaproteobacteria</taxon>
        <taxon>Rickettsiales</taxon>
        <taxon>Anaplasmataceae</taxon>
        <taxon>Ehrlichia</taxon>
    </lineage>
</organism>
<evidence type="ECO:0000255" key="1">
    <source>
        <dbReference type="HAMAP-Rule" id="MF_00089"/>
    </source>
</evidence>
<accession>Q5FHG9</accession>
<reference key="1">
    <citation type="journal article" date="2006" name="J. Bacteriol.">
        <title>Comparative genomic analysis of three strains of Ehrlichia ruminantium reveals an active process of genome size plasticity.</title>
        <authorList>
            <person name="Frutos R."/>
            <person name="Viari A."/>
            <person name="Ferraz C."/>
            <person name="Morgat A."/>
            <person name="Eychenie S."/>
            <person name="Kandassamy Y."/>
            <person name="Chantal I."/>
            <person name="Bensaid A."/>
            <person name="Coissac E."/>
            <person name="Vachiery N."/>
            <person name="Demaille J."/>
            <person name="Martinez D."/>
        </authorList>
    </citation>
    <scope>NUCLEOTIDE SEQUENCE [LARGE SCALE GENOMIC DNA]</scope>
    <source>
        <strain>Gardel</strain>
    </source>
</reference>
<keyword id="KW-0004">4Fe-4S</keyword>
<keyword id="KW-0408">Iron</keyword>
<keyword id="KW-0411">Iron-sulfur</keyword>
<keyword id="KW-0456">Lyase</keyword>
<keyword id="KW-0479">Metal-binding</keyword>
<keyword id="KW-0949">S-adenosyl-L-methionine</keyword>
<keyword id="KW-0784">Thiamine biosynthesis</keyword>
<keyword id="KW-0862">Zinc</keyword>